<dbReference type="EC" id="2.1.1.33" evidence="1"/>
<dbReference type="EMBL" id="AB201305">
    <property type="protein sequence ID" value="BAD89293.1"/>
    <property type="molecule type" value="Genomic_DNA"/>
</dbReference>
<dbReference type="EMBL" id="KB725789">
    <property type="protein sequence ID" value="ENH85272.1"/>
    <property type="status" value="ALT_SEQ"/>
    <property type="molecule type" value="Genomic_DNA"/>
</dbReference>
<dbReference type="EMBL" id="AMCV02000004">
    <property type="protein sequence ID" value="TDZ24529.1"/>
    <property type="status" value="ALT_SEQ"/>
    <property type="molecule type" value="Genomic_DNA"/>
</dbReference>
<dbReference type="SMR" id="Q5H737"/>
<dbReference type="STRING" id="1213857.Q5H737"/>
<dbReference type="eggNOG" id="KOG3115">
    <property type="taxonomic scope" value="Eukaryota"/>
</dbReference>
<dbReference type="OrthoDB" id="47276at2759"/>
<dbReference type="UniPathway" id="UPA00989"/>
<dbReference type="Proteomes" id="UP000014480">
    <property type="component" value="Unassembled WGS sequence"/>
</dbReference>
<dbReference type="GO" id="GO:0005634">
    <property type="term" value="C:nucleus"/>
    <property type="evidence" value="ECO:0007669"/>
    <property type="project" value="UniProtKB-SubCell"/>
</dbReference>
<dbReference type="GO" id="GO:0043527">
    <property type="term" value="C:tRNA methyltransferase complex"/>
    <property type="evidence" value="ECO:0007669"/>
    <property type="project" value="TreeGrafter"/>
</dbReference>
<dbReference type="GO" id="GO:0008176">
    <property type="term" value="F:tRNA (guanine(46)-N7)-methyltransferase activity"/>
    <property type="evidence" value="ECO:0007669"/>
    <property type="project" value="UniProtKB-UniRule"/>
</dbReference>
<dbReference type="GO" id="GO:0000049">
    <property type="term" value="F:tRNA binding"/>
    <property type="evidence" value="ECO:0007669"/>
    <property type="project" value="UniProtKB-UniRule"/>
</dbReference>
<dbReference type="CDD" id="cd02440">
    <property type="entry name" value="AdoMet_MTases"/>
    <property type="match status" value="1"/>
</dbReference>
<dbReference type="FunFam" id="3.40.50.150:FF:000060">
    <property type="entry name" value="tRNA (guanine-N(7)-)-methyltransferase"/>
    <property type="match status" value="1"/>
</dbReference>
<dbReference type="Gene3D" id="3.40.50.150">
    <property type="entry name" value="Vaccinia Virus protein VP39"/>
    <property type="match status" value="1"/>
</dbReference>
<dbReference type="HAMAP" id="MF_03055">
    <property type="entry name" value="tRNA_methyltr_TrmB_euk"/>
    <property type="match status" value="1"/>
</dbReference>
<dbReference type="InterPro" id="IPR029063">
    <property type="entry name" value="SAM-dependent_MTases_sf"/>
</dbReference>
<dbReference type="InterPro" id="IPR025763">
    <property type="entry name" value="Trm8_euk"/>
</dbReference>
<dbReference type="InterPro" id="IPR003358">
    <property type="entry name" value="tRNA_(Gua-N-7)_MeTrfase_Trmb"/>
</dbReference>
<dbReference type="NCBIfam" id="TIGR00091">
    <property type="entry name" value="tRNA (guanosine(46)-N7)-methyltransferase TrmB"/>
    <property type="match status" value="1"/>
</dbReference>
<dbReference type="PANTHER" id="PTHR23417">
    <property type="entry name" value="3-DEOXY-D-MANNO-OCTULOSONIC-ACID TRANSFERASE/TRNA GUANINE-N 7 - -METHYLTRANSFERASE"/>
    <property type="match status" value="1"/>
</dbReference>
<dbReference type="PANTHER" id="PTHR23417:SF16">
    <property type="entry name" value="TRNA (GUANINE-N(7)-)-METHYLTRANSFERASE"/>
    <property type="match status" value="1"/>
</dbReference>
<dbReference type="Pfam" id="PF02390">
    <property type="entry name" value="Methyltransf_4"/>
    <property type="match status" value="1"/>
</dbReference>
<dbReference type="SUPFAM" id="SSF53335">
    <property type="entry name" value="S-adenosyl-L-methionine-dependent methyltransferases"/>
    <property type="match status" value="1"/>
</dbReference>
<dbReference type="PROSITE" id="PS51625">
    <property type="entry name" value="SAM_MT_TRMB"/>
    <property type="match status" value="1"/>
</dbReference>
<proteinExistence type="inferred from homology"/>
<accession>Q5H737</accession>
<accession>A0A484G1I9</accession>
<accession>N4VN37</accession>
<gene>
    <name evidence="1" type="primary">TRM8</name>
    <name type="synonym">APH1</name>
    <name type="ORF">Cob_06482</name>
    <name type="ORF">Cob_v002187</name>
</gene>
<keyword id="KW-0489">Methyltransferase</keyword>
<keyword id="KW-0539">Nucleus</keyword>
<keyword id="KW-1185">Reference proteome</keyword>
<keyword id="KW-0694">RNA-binding</keyword>
<keyword id="KW-0949">S-adenosyl-L-methionine</keyword>
<keyword id="KW-0808">Transferase</keyword>
<keyword id="KW-0819">tRNA processing</keyword>
<keyword id="KW-0820">tRNA-binding</keyword>
<feature type="chain" id="PRO_0000370596" description="tRNA (guanine-N(7)-)-methyltransferase">
    <location>
        <begin position="1"/>
        <end position="286"/>
    </location>
</feature>
<feature type="region of interest" description="Disordered" evidence="2">
    <location>
        <begin position="1"/>
        <end position="22"/>
    </location>
</feature>
<feature type="active site" evidence="1">
    <location>
        <position position="185"/>
    </location>
</feature>
<feature type="binding site" evidence="1">
    <location>
        <position position="104"/>
    </location>
    <ligand>
        <name>S-adenosyl-L-methionine</name>
        <dbReference type="ChEBI" id="CHEBI:59789"/>
    </ligand>
</feature>
<feature type="binding site" evidence="1">
    <location>
        <begin position="127"/>
        <end position="128"/>
    </location>
    <ligand>
        <name>S-adenosyl-L-methionine</name>
        <dbReference type="ChEBI" id="CHEBI:59789"/>
    </ligand>
</feature>
<feature type="binding site" evidence="1">
    <location>
        <begin position="162"/>
        <end position="163"/>
    </location>
    <ligand>
        <name>S-adenosyl-L-methionine</name>
        <dbReference type="ChEBI" id="CHEBI:59789"/>
    </ligand>
</feature>
<feature type="binding site" evidence="1">
    <location>
        <position position="182"/>
    </location>
    <ligand>
        <name>S-adenosyl-L-methionine</name>
        <dbReference type="ChEBI" id="CHEBI:59789"/>
    </ligand>
</feature>
<feature type="binding site" evidence="1">
    <location>
        <begin position="260"/>
        <end position="262"/>
    </location>
    <ligand>
        <name>S-adenosyl-L-methionine</name>
        <dbReference type="ChEBI" id="CHEBI:59789"/>
    </ligand>
</feature>
<protein>
    <recommendedName>
        <fullName evidence="1">tRNA (guanine-N(7)-)-methyltransferase</fullName>
        <ecNumber evidence="1">2.1.1.33</ecNumber>
    </recommendedName>
    <alternativeName>
        <fullName>Appressorial penetration into host protein 1</fullName>
    </alternativeName>
    <alternativeName>
        <fullName evidence="1">Transfer RNA methyltransferase 8</fullName>
    </alternativeName>
    <alternativeName>
        <fullName evidence="1">tRNA (guanine(46)-N(7))-methyltransferase</fullName>
    </alternativeName>
    <alternativeName>
        <fullName evidence="1">tRNA(m7G46)-methyltransferase</fullName>
    </alternativeName>
</protein>
<evidence type="ECO:0000255" key="1">
    <source>
        <dbReference type="HAMAP-Rule" id="MF_03055"/>
    </source>
</evidence>
<evidence type="ECO:0000256" key="2">
    <source>
        <dbReference type="SAM" id="MobiDB-lite"/>
    </source>
</evidence>
<evidence type="ECO:0000269" key="3">
    <source>
    </source>
</evidence>
<evidence type="ECO:0000305" key="4"/>
<organism>
    <name type="scientific">Colletotrichum orbiculare (strain 104-T / ATCC 96160 / CBS 514.97 / LARS 414 / MAFF 240422)</name>
    <name type="common">Cucumber anthracnose fungus</name>
    <name type="synonym">Colletotrichum lagenarium</name>
    <dbReference type="NCBI Taxonomy" id="1213857"/>
    <lineage>
        <taxon>Eukaryota</taxon>
        <taxon>Fungi</taxon>
        <taxon>Dikarya</taxon>
        <taxon>Ascomycota</taxon>
        <taxon>Pezizomycotina</taxon>
        <taxon>Sordariomycetes</taxon>
        <taxon>Hypocreomycetidae</taxon>
        <taxon>Glomerellales</taxon>
        <taxon>Glomerellaceae</taxon>
        <taxon>Colletotrichum</taxon>
        <taxon>Colletotrichum orbiculare species complex</taxon>
    </lineage>
</organism>
<comment type="function">
    <text evidence="1">Catalyzes the formation of N(7)-methylguanine at position 46 (m7G46) in tRNA.</text>
</comment>
<comment type="catalytic activity">
    <reaction evidence="1">
        <text>guanosine(46) in tRNA + S-adenosyl-L-methionine = N(7)-methylguanosine(46) in tRNA + S-adenosyl-L-homocysteine</text>
        <dbReference type="Rhea" id="RHEA:42708"/>
        <dbReference type="Rhea" id="RHEA-COMP:10188"/>
        <dbReference type="Rhea" id="RHEA-COMP:10189"/>
        <dbReference type="ChEBI" id="CHEBI:57856"/>
        <dbReference type="ChEBI" id="CHEBI:59789"/>
        <dbReference type="ChEBI" id="CHEBI:74269"/>
        <dbReference type="ChEBI" id="CHEBI:74480"/>
        <dbReference type="EC" id="2.1.1.33"/>
    </reaction>
</comment>
<comment type="pathway">
    <text evidence="1">tRNA modification; N(7)-methylguanine-tRNA biosynthesis.</text>
</comment>
<comment type="subunit">
    <text evidence="1">Forms a complex with TRM82.</text>
</comment>
<comment type="subcellular location">
    <subcellularLocation>
        <location evidence="1">Nucleus</location>
    </subcellularLocation>
</comment>
<comment type="disruption phenotype">
    <text evidence="3">Significant reduction in pathogenicity on the host plants. Mutants develop penetration hyphae into cellophane, suggesting that appressoria of the mutants retain basic function for penetration. However, they fail to develop intracellular penetration hyphae into epidermis of the host plants.</text>
</comment>
<comment type="similarity">
    <text evidence="1">Belongs to the class I-like SAM-binding methyltransferase superfamily. TrmB family.</text>
</comment>
<comment type="sequence caution" evidence="4">
    <conflict type="erroneous gene model prediction">
        <sequence resource="EMBL-CDS" id="ENH85272"/>
    </conflict>
</comment>
<comment type="sequence caution" evidence="4">
    <conflict type="erroneous gene model prediction">
        <sequence resource="EMBL-CDS" id="TDZ24529"/>
    </conflict>
</comment>
<reference key="1">
    <citation type="journal article" date="2006" name="Mol. Microbiol.">
        <title>A gene involved in modifying transfer RNA is required for fungal pathogenicity and stress tolerance of Colletotrichum lagenarium.</title>
        <authorList>
            <person name="Takano Y."/>
            <person name="Takayanagi N."/>
            <person name="Hori H."/>
            <person name="Ikeuchi Y."/>
            <person name="Suzuki T."/>
            <person name="Kimura A."/>
            <person name="Okuno T."/>
        </authorList>
    </citation>
    <scope>NUCLEOTIDE SEQUENCE [GENOMIC DNA]</scope>
    <scope>DISRUPTION PHENOTYPE</scope>
    <source>
        <strain>104-T / ATCC 96160 / CBS 514.97 / LARS 414 / MAFF 240422</strain>
    </source>
</reference>
<reference key="2">
    <citation type="journal article" date="2013" name="New Phytol.">
        <title>Comparative genomic and transcriptomic analyses reveal the hemibiotrophic stage shift of Colletotrichum fungi.</title>
        <authorList>
            <person name="Gan P."/>
            <person name="Ikeda K."/>
            <person name="Irieda H."/>
            <person name="Narusaka M."/>
            <person name="O'Connell R.J."/>
            <person name="Narusaka Y."/>
            <person name="Takano Y."/>
            <person name="Kubo Y."/>
            <person name="Shirasu K."/>
        </authorList>
    </citation>
    <scope>NUCLEOTIDE SEQUENCE [LARGE SCALE GENOMIC DNA]</scope>
    <source>
        <strain>104-T / ATCC 96160 / CBS 514.97 / LARS 414 / MAFF 240422</strain>
    </source>
</reference>
<reference key="3">
    <citation type="journal article" date="2019" name="Mol. Plant Microbe Interact.">
        <title>Genome sequence resources for four phytopathogenic fungi from the Colletotrichum orbiculare species complex.</title>
        <authorList>
            <person name="Gan P."/>
            <person name="Tsushima A."/>
            <person name="Narusaka M."/>
            <person name="Narusaka Y."/>
            <person name="Takano Y."/>
            <person name="Kubo Y."/>
            <person name="Shirasu K."/>
        </authorList>
    </citation>
    <scope>GENOME REANNOTATION</scope>
    <source>
        <strain>104-T / ATCC 96160 / CBS 514.97 / LARS 414 / MAFF 240422</strain>
    </source>
</reference>
<name>TRMB_COLOR</name>
<sequence>MGRARPKSQKRGDYRVSRSQENAAELPKKKFYRQRAHANPFSDHHLVYPACPDEMDWTLYYPAFPTQGETLPNHIFTHNQSCMRISDSTRSGSLQKNIEVVDIGCGFGGLLVALAPLMPETLALGLEIRTSVTEYVQEKIRALRAQNEGTGLYQNIGCIRANSMKFLPNFLRKSQLSKIFICFPDPHFKARKHKARIVSATLNSEYAFALRPGGIVYTITDVEPLHQWMAEHFVAHPSFERLSQEEEEADECVQVMKSETEEGRKVTRNQGQKFVALFRRIEDPPW</sequence>